<reference key="1">
    <citation type="journal article" date="2001" name="Science">
        <title>Mechanisms of evolution in Rickettsia conorii and R. prowazekii.</title>
        <authorList>
            <person name="Ogata H."/>
            <person name="Audic S."/>
            <person name="Renesto-Audiffren P."/>
            <person name="Fournier P.-E."/>
            <person name="Barbe V."/>
            <person name="Samson D."/>
            <person name="Roux V."/>
            <person name="Cossart P."/>
            <person name="Weissenbach J."/>
            <person name="Claverie J.-M."/>
            <person name="Raoult D."/>
        </authorList>
    </citation>
    <scope>NUCLEOTIDE SEQUENCE [LARGE SCALE GENOMIC DNA]</scope>
    <source>
        <strain>ATCC VR-613 / Malish 7</strain>
    </source>
</reference>
<sequence>MNTKFPITAKGFEKLEHELKHLKHVERKKISADIAEAREHGDLSENAEYEAAREKQAFIEGRIKELEDMTARAEIIDIGKLSGDNIKFGATVTLIDDDTEEEVTYIIVGEYEADITRKRVSIASPIAKALIGKSVGDFVEVTTPKGSKSYEVVTVEYKELEL</sequence>
<accession>Q92FZ5</accession>
<comment type="function">
    <text evidence="1">Necessary for efficient RNA polymerase transcription elongation past template-encoded arresting sites. The arresting sites in DNA have the property of trapping a certain fraction of elongating RNA polymerases that pass through, resulting in locked ternary complexes. Cleavage of the nascent transcript by cleavage factors such as GreA or GreB allows the resumption of elongation from the new 3'terminus. GreA releases sequences of 2 to 3 nucleotides.</text>
</comment>
<comment type="similarity">
    <text evidence="1">Belongs to the GreA/GreB family.</text>
</comment>
<comment type="sequence caution" evidence="2">
    <conflict type="erroneous initiation">
        <sequence resource="EMBL-CDS" id="AAL03870"/>
    </conflict>
</comment>
<gene>
    <name evidence="1" type="primary">greA</name>
    <name type="ordered locus">RC1332</name>
</gene>
<keyword id="KW-0175">Coiled coil</keyword>
<keyword id="KW-0238">DNA-binding</keyword>
<keyword id="KW-0804">Transcription</keyword>
<keyword id="KW-0805">Transcription regulation</keyword>
<organism>
    <name type="scientific">Rickettsia conorii (strain ATCC VR-613 / Malish 7)</name>
    <dbReference type="NCBI Taxonomy" id="272944"/>
    <lineage>
        <taxon>Bacteria</taxon>
        <taxon>Pseudomonadati</taxon>
        <taxon>Pseudomonadota</taxon>
        <taxon>Alphaproteobacteria</taxon>
        <taxon>Rickettsiales</taxon>
        <taxon>Rickettsiaceae</taxon>
        <taxon>Rickettsieae</taxon>
        <taxon>Rickettsia</taxon>
        <taxon>spotted fever group</taxon>
    </lineage>
</organism>
<name>GREA_RICCN</name>
<protein>
    <recommendedName>
        <fullName evidence="1">Transcription elongation factor GreA</fullName>
    </recommendedName>
    <alternativeName>
        <fullName evidence="1">Transcript cleavage factor GreA</fullName>
    </alternativeName>
</protein>
<evidence type="ECO:0000255" key="1">
    <source>
        <dbReference type="HAMAP-Rule" id="MF_00105"/>
    </source>
</evidence>
<evidence type="ECO:0000305" key="2"/>
<dbReference type="EMBL" id="AE006914">
    <property type="protein sequence ID" value="AAL03870.1"/>
    <property type="status" value="ALT_INIT"/>
    <property type="molecule type" value="Genomic_DNA"/>
</dbReference>
<dbReference type="PIR" id="D97866">
    <property type="entry name" value="D97866"/>
</dbReference>
<dbReference type="RefSeq" id="WP_004997127.1">
    <property type="nucleotide sequence ID" value="NC_003103.1"/>
</dbReference>
<dbReference type="SMR" id="Q92FZ5"/>
<dbReference type="GeneID" id="95361721"/>
<dbReference type="KEGG" id="rco:RC1332"/>
<dbReference type="HOGENOM" id="CLU_101379_2_0_5"/>
<dbReference type="Proteomes" id="UP000000816">
    <property type="component" value="Chromosome"/>
</dbReference>
<dbReference type="GO" id="GO:0003677">
    <property type="term" value="F:DNA binding"/>
    <property type="evidence" value="ECO:0007669"/>
    <property type="project" value="UniProtKB-UniRule"/>
</dbReference>
<dbReference type="GO" id="GO:0070063">
    <property type="term" value="F:RNA polymerase binding"/>
    <property type="evidence" value="ECO:0007669"/>
    <property type="project" value="InterPro"/>
</dbReference>
<dbReference type="GO" id="GO:0006354">
    <property type="term" value="P:DNA-templated transcription elongation"/>
    <property type="evidence" value="ECO:0007669"/>
    <property type="project" value="TreeGrafter"/>
</dbReference>
<dbReference type="GO" id="GO:0032784">
    <property type="term" value="P:regulation of DNA-templated transcription elongation"/>
    <property type="evidence" value="ECO:0007669"/>
    <property type="project" value="UniProtKB-UniRule"/>
</dbReference>
<dbReference type="FunFam" id="1.10.287.180:FF:000001">
    <property type="entry name" value="Transcription elongation factor GreA"/>
    <property type="match status" value="1"/>
</dbReference>
<dbReference type="FunFam" id="3.10.50.30:FF:000001">
    <property type="entry name" value="Transcription elongation factor GreA"/>
    <property type="match status" value="1"/>
</dbReference>
<dbReference type="Gene3D" id="3.10.50.30">
    <property type="entry name" value="Transcription elongation factor, GreA/GreB, C-terminal domain"/>
    <property type="match status" value="1"/>
</dbReference>
<dbReference type="Gene3D" id="1.10.287.180">
    <property type="entry name" value="Transcription elongation factor, GreA/GreB, N-terminal domain"/>
    <property type="match status" value="1"/>
</dbReference>
<dbReference type="HAMAP" id="MF_00105">
    <property type="entry name" value="GreA_GreB"/>
    <property type="match status" value="1"/>
</dbReference>
<dbReference type="InterPro" id="IPR036953">
    <property type="entry name" value="GreA/GreB_C_sf"/>
</dbReference>
<dbReference type="InterPro" id="IPR018151">
    <property type="entry name" value="TF_GreA/GreB_CS"/>
</dbReference>
<dbReference type="InterPro" id="IPR006359">
    <property type="entry name" value="Tscrpt_elong_fac_GreA"/>
</dbReference>
<dbReference type="InterPro" id="IPR028624">
    <property type="entry name" value="Tscrpt_elong_fac_GreA/B"/>
</dbReference>
<dbReference type="InterPro" id="IPR001437">
    <property type="entry name" value="Tscrpt_elong_fac_GreA/B_C"/>
</dbReference>
<dbReference type="InterPro" id="IPR023459">
    <property type="entry name" value="Tscrpt_elong_fac_GreA/B_fam"/>
</dbReference>
<dbReference type="InterPro" id="IPR022691">
    <property type="entry name" value="Tscrpt_elong_fac_GreA/B_N"/>
</dbReference>
<dbReference type="InterPro" id="IPR036805">
    <property type="entry name" value="Tscrpt_elong_fac_GreA/B_N_sf"/>
</dbReference>
<dbReference type="NCBIfam" id="TIGR01462">
    <property type="entry name" value="greA"/>
    <property type="match status" value="1"/>
</dbReference>
<dbReference type="NCBIfam" id="NF001261">
    <property type="entry name" value="PRK00226.1-2"/>
    <property type="match status" value="1"/>
</dbReference>
<dbReference type="NCBIfam" id="NF001263">
    <property type="entry name" value="PRK00226.1-4"/>
    <property type="match status" value="1"/>
</dbReference>
<dbReference type="NCBIfam" id="NF001264">
    <property type="entry name" value="PRK00226.1-5"/>
    <property type="match status" value="1"/>
</dbReference>
<dbReference type="PANTHER" id="PTHR30437">
    <property type="entry name" value="TRANSCRIPTION ELONGATION FACTOR GREA"/>
    <property type="match status" value="1"/>
</dbReference>
<dbReference type="PANTHER" id="PTHR30437:SF4">
    <property type="entry name" value="TRANSCRIPTION ELONGATION FACTOR GREA"/>
    <property type="match status" value="1"/>
</dbReference>
<dbReference type="Pfam" id="PF01272">
    <property type="entry name" value="GreA_GreB"/>
    <property type="match status" value="1"/>
</dbReference>
<dbReference type="Pfam" id="PF03449">
    <property type="entry name" value="GreA_GreB_N"/>
    <property type="match status" value="1"/>
</dbReference>
<dbReference type="PIRSF" id="PIRSF006092">
    <property type="entry name" value="GreA_GreB"/>
    <property type="match status" value="1"/>
</dbReference>
<dbReference type="SUPFAM" id="SSF54534">
    <property type="entry name" value="FKBP-like"/>
    <property type="match status" value="1"/>
</dbReference>
<dbReference type="SUPFAM" id="SSF46557">
    <property type="entry name" value="GreA transcript cleavage protein, N-terminal domain"/>
    <property type="match status" value="1"/>
</dbReference>
<dbReference type="PROSITE" id="PS00829">
    <property type="entry name" value="GREAB_1"/>
    <property type="match status" value="1"/>
</dbReference>
<dbReference type="PROSITE" id="PS00830">
    <property type="entry name" value="GREAB_2"/>
    <property type="match status" value="1"/>
</dbReference>
<proteinExistence type="inferred from homology"/>
<feature type="chain" id="PRO_0000176963" description="Transcription elongation factor GreA">
    <location>
        <begin position="1"/>
        <end position="162"/>
    </location>
</feature>
<feature type="coiled-coil region" evidence="1">
    <location>
        <begin position="45"/>
        <end position="74"/>
    </location>
</feature>